<protein>
    <recommendedName>
        <fullName>Probable pectin lyase B</fullName>
        <shortName>PLB</shortName>
        <ecNumber>4.2.2.10</ecNumber>
    </recommendedName>
</protein>
<feature type="signal peptide" evidence="2">
    <location>
        <begin position="1"/>
        <end position="19"/>
    </location>
</feature>
<feature type="chain" id="PRO_0000394345" description="Probable pectin lyase B">
    <location>
        <begin position="20"/>
        <end position="375"/>
    </location>
</feature>
<feature type="active site" evidence="2">
    <location>
        <position position="255"/>
    </location>
</feature>
<feature type="glycosylation site" description="N-linked (GlcNAc...) asparagine" evidence="2">
    <location>
        <position position="128"/>
    </location>
</feature>
<feature type="disulfide bond" evidence="1">
    <location>
        <begin position="82"/>
        <end position="101"/>
    </location>
</feature>
<feature type="disulfide bond" evidence="1">
    <location>
        <begin position="91"/>
        <end position="225"/>
    </location>
</feature>
<feature type="disulfide bond" evidence="1">
    <location>
        <begin position="321"/>
        <end position="329"/>
    </location>
</feature>
<reference key="1">
    <citation type="journal article" date="2008" name="PLoS Genet.">
        <title>Genomic islands in the pathogenic filamentous fungus Aspergillus fumigatus.</title>
        <authorList>
            <person name="Fedorova N.D."/>
            <person name="Khaldi N."/>
            <person name="Joardar V.S."/>
            <person name="Maiti R."/>
            <person name="Amedeo P."/>
            <person name="Anderson M.J."/>
            <person name="Crabtree J."/>
            <person name="Silva J.C."/>
            <person name="Badger J.H."/>
            <person name="Albarraq A."/>
            <person name="Angiuoli S."/>
            <person name="Bussey H."/>
            <person name="Bowyer P."/>
            <person name="Cotty P.J."/>
            <person name="Dyer P.S."/>
            <person name="Egan A."/>
            <person name="Galens K."/>
            <person name="Fraser-Liggett C.M."/>
            <person name="Haas B.J."/>
            <person name="Inman J.M."/>
            <person name="Kent R."/>
            <person name="Lemieux S."/>
            <person name="Malavazi I."/>
            <person name="Orvis J."/>
            <person name="Roemer T."/>
            <person name="Ronning C.M."/>
            <person name="Sundaram J.P."/>
            <person name="Sutton G."/>
            <person name="Turner G."/>
            <person name="Venter J.C."/>
            <person name="White O.R."/>
            <person name="Whitty B.R."/>
            <person name="Youngman P."/>
            <person name="Wolfe K.H."/>
            <person name="Goldman G.H."/>
            <person name="Wortman J.R."/>
            <person name="Jiang B."/>
            <person name="Denning D.W."/>
            <person name="Nierman W.C."/>
        </authorList>
    </citation>
    <scope>NUCLEOTIDE SEQUENCE [LARGE SCALE GENOMIC DNA]</scope>
    <source>
        <strain>CBS 144.89 / FGSC A1163 / CEA10</strain>
    </source>
</reference>
<dbReference type="EC" id="4.2.2.10"/>
<dbReference type="EMBL" id="DS499601">
    <property type="protein sequence ID" value="EDP48344.1"/>
    <property type="status" value="ALT_INIT"/>
    <property type="molecule type" value="Genomic_DNA"/>
</dbReference>
<dbReference type="SMR" id="B0YCL3"/>
<dbReference type="GlyCosmos" id="B0YCL3">
    <property type="glycosylation" value="1 site, No reported glycans"/>
</dbReference>
<dbReference type="OrthoDB" id="88760at5052"/>
<dbReference type="PhylomeDB" id="B0YCL3"/>
<dbReference type="Proteomes" id="UP000001699">
    <property type="component" value="Unassembled WGS sequence"/>
</dbReference>
<dbReference type="GO" id="GO:0005576">
    <property type="term" value="C:extracellular region"/>
    <property type="evidence" value="ECO:0007669"/>
    <property type="project" value="UniProtKB-SubCell"/>
</dbReference>
<dbReference type="GO" id="GO:0030570">
    <property type="term" value="F:pectate lyase activity"/>
    <property type="evidence" value="ECO:0007669"/>
    <property type="project" value="InterPro"/>
</dbReference>
<dbReference type="GO" id="GO:0047490">
    <property type="term" value="F:pectin lyase activity"/>
    <property type="evidence" value="ECO:0000250"/>
    <property type="project" value="UniProtKB"/>
</dbReference>
<dbReference type="GO" id="GO:0071555">
    <property type="term" value="P:cell wall organization"/>
    <property type="evidence" value="ECO:0007669"/>
    <property type="project" value="UniProtKB-KW"/>
</dbReference>
<dbReference type="GO" id="GO:0045490">
    <property type="term" value="P:pectin catabolic process"/>
    <property type="evidence" value="ECO:0000250"/>
    <property type="project" value="UniProtKB"/>
</dbReference>
<dbReference type="FunFam" id="2.160.20.10:FF:000003">
    <property type="entry name" value="Pectin lyase F"/>
    <property type="match status" value="1"/>
</dbReference>
<dbReference type="Gene3D" id="2.160.20.10">
    <property type="entry name" value="Single-stranded right-handed beta-helix, Pectin lyase-like"/>
    <property type="match status" value="1"/>
</dbReference>
<dbReference type="InterPro" id="IPR002022">
    <property type="entry name" value="Pec_lyase"/>
</dbReference>
<dbReference type="InterPro" id="IPR012334">
    <property type="entry name" value="Pectin_lyas_fold"/>
</dbReference>
<dbReference type="InterPro" id="IPR011050">
    <property type="entry name" value="Pectin_lyase_fold/virulence"/>
</dbReference>
<dbReference type="InterPro" id="IPR045032">
    <property type="entry name" value="PEL"/>
</dbReference>
<dbReference type="PANTHER" id="PTHR31683">
    <property type="entry name" value="PECTATE LYASE 18-RELATED"/>
    <property type="match status" value="1"/>
</dbReference>
<dbReference type="PANTHER" id="PTHR31683:SF16">
    <property type="entry name" value="PECTIN LYASE A-RELATED"/>
    <property type="match status" value="1"/>
</dbReference>
<dbReference type="Pfam" id="PF00544">
    <property type="entry name" value="Pectate_lyase_4"/>
    <property type="match status" value="1"/>
</dbReference>
<dbReference type="SMART" id="SM00656">
    <property type="entry name" value="Amb_all"/>
    <property type="match status" value="1"/>
</dbReference>
<dbReference type="SUPFAM" id="SSF51126">
    <property type="entry name" value="Pectin lyase-like"/>
    <property type="match status" value="1"/>
</dbReference>
<proteinExistence type="inferred from homology"/>
<sequence length="375" mass="39022">MKYAAFLPTIGALVSQAIAIGVQGTAEGFASSVTGGGSATPVYPSTTDELVSYLGDSEARVIVLTKTFDFTGTEGTTTATGCAPWGTASGCQVAINKDNWCTNYQSSAPSVSVTYDNAGSLGITVNSNKSLIGEGTSGVIKGKGLRIVSGAKNIIIQNIAITDINPKYVWGGDAITINQADLVWVDHVTTARIGRQHYVLGTEASNRITLSNNYIDGESDYSATCDNHHYWNIYLDGSSDKVTLKGNYLYKTSGRAPKVQGNTYLHAVNNYWNDNSNHAFEIGDGAYVLAEGNLFSDVTAAVESSSFTGELFGSASASSTCQSYIGRDCVANSFSSSGTLSGSNVDVLSKFKGETVASASAAGTSPASSAGQGHL</sequence>
<name>PELB_ASPFC</name>
<gene>
    <name type="primary">pelB</name>
    <name type="ORF">AFUB_090600</name>
</gene>
<accession>B0YCL3</accession>
<evidence type="ECO:0000250" key="1"/>
<evidence type="ECO:0000255" key="2"/>
<evidence type="ECO:0000305" key="3"/>
<keyword id="KW-0119">Carbohydrate metabolism</keyword>
<keyword id="KW-0961">Cell wall biogenesis/degradation</keyword>
<keyword id="KW-1015">Disulfide bond</keyword>
<keyword id="KW-0325">Glycoprotein</keyword>
<keyword id="KW-0456">Lyase</keyword>
<keyword id="KW-0624">Polysaccharide degradation</keyword>
<keyword id="KW-0964">Secreted</keyword>
<keyword id="KW-0732">Signal</keyword>
<organism>
    <name type="scientific">Aspergillus fumigatus (strain CBS 144.89 / FGSC A1163 / CEA10)</name>
    <name type="common">Neosartorya fumigata</name>
    <dbReference type="NCBI Taxonomy" id="451804"/>
    <lineage>
        <taxon>Eukaryota</taxon>
        <taxon>Fungi</taxon>
        <taxon>Dikarya</taxon>
        <taxon>Ascomycota</taxon>
        <taxon>Pezizomycotina</taxon>
        <taxon>Eurotiomycetes</taxon>
        <taxon>Eurotiomycetidae</taxon>
        <taxon>Eurotiales</taxon>
        <taxon>Aspergillaceae</taxon>
        <taxon>Aspergillus</taxon>
        <taxon>Aspergillus subgen. Fumigati</taxon>
    </lineage>
</organism>
<comment type="function">
    <text evidence="1">Pectinolytic enzymes consist of four classes of enzymes: pectin lyase, polygalacturonase, pectin methylesterase and rhamnogalacturonase. Among pectinolytic enzymes, pectin lyase is the most important in depolymerization of pectin, since it cleaves internal glycosidic bonds of highly methylated pectins (By similarity).</text>
</comment>
<comment type="catalytic activity">
    <reaction>
        <text>Eliminative cleavage of (1-&gt;4)-alpha-D-galacturonan methyl ester to give oligosaccharides with 4-deoxy-6-O-methyl-alpha-D-galact-4-enuronosyl groups at their non-reducing ends.</text>
        <dbReference type="EC" id="4.2.2.10"/>
    </reaction>
</comment>
<comment type="subcellular location">
    <subcellularLocation>
        <location evidence="1">Secreted</location>
    </subcellularLocation>
</comment>
<comment type="similarity">
    <text evidence="3">Belongs to the polysaccharide lyase 1 family.</text>
</comment>
<comment type="sequence caution" evidence="3">
    <conflict type="erroneous initiation">
        <sequence resource="EMBL-CDS" id="EDP48344"/>
    </conflict>
    <text>Extended N-terminus.</text>
</comment>